<comment type="similarity">
    <text evidence="2">Belongs to the ABC transporter superfamily.</text>
</comment>
<comment type="sequence caution" evidence="2">
    <conflict type="erroneous initiation">
        <sequence resource="EMBL-CDS" id="AAK05320"/>
    </conflict>
</comment>
<proteinExistence type="inferred from homology"/>
<name>YMEB_LACLA</name>
<organism>
    <name type="scientific">Lactococcus lactis subsp. lactis (strain IL1403)</name>
    <name type="common">Streptococcus lactis</name>
    <dbReference type="NCBI Taxonomy" id="272623"/>
    <lineage>
        <taxon>Bacteria</taxon>
        <taxon>Bacillati</taxon>
        <taxon>Bacillota</taxon>
        <taxon>Bacilli</taxon>
        <taxon>Lactobacillales</taxon>
        <taxon>Streptococcaceae</taxon>
        <taxon>Lactococcus</taxon>
    </lineage>
</organism>
<evidence type="ECO:0000255" key="1">
    <source>
        <dbReference type="PROSITE-ProRule" id="PRU00434"/>
    </source>
</evidence>
<evidence type="ECO:0000305" key="2"/>
<gene>
    <name type="primary">ymeB</name>
    <name type="ordered locus">LL1222</name>
    <name type="ORF">L44550</name>
</gene>
<sequence length="259" mass="29628">MTIINLKNINLTRNKKEILKDITWKVNPGENWVILGLNGSGKSSLLKLILAEEWKTSGEITVLNTQFGNGEIPKLRKRISVVGSFIAERFQPNIKAENLVYTGKFNSSMLYKPYTDQELDEARQLLRQMGAKSLIGRNYASLSQGEKQVLLIARSLILKPELLILDEATNGLDLFAKEKLLKQLQQINQLKTAPTLIYISHHPDEITDIFTHLLLLREGKVIQSGKKENLLNEKILTDFYQEKVEVHRFEQKYFVIPAN</sequence>
<accession>Q02151</accession>
<accession>Q9CG85</accession>
<dbReference type="EMBL" id="U92974">
    <property type="protein sequence ID" value="AAB81917.1"/>
    <property type="molecule type" value="Genomic_DNA"/>
</dbReference>
<dbReference type="EMBL" id="AE005176">
    <property type="protein sequence ID" value="AAK05320.1"/>
    <property type="status" value="ALT_INIT"/>
    <property type="molecule type" value="Genomic_DNA"/>
</dbReference>
<dbReference type="PIR" id="F36889">
    <property type="entry name" value="F36889"/>
</dbReference>
<dbReference type="PIR" id="F86777">
    <property type="entry name" value="F86777"/>
</dbReference>
<dbReference type="PIR" id="S35136">
    <property type="entry name" value="S35136"/>
</dbReference>
<dbReference type="RefSeq" id="NP_267378.2">
    <property type="nucleotide sequence ID" value="NC_002662.1"/>
</dbReference>
<dbReference type="RefSeq" id="WP_003131130.1">
    <property type="nucleotide sequence ID" value="NC_002662.1"/>
</dbReference>
<dbReference type="SMR" id="Q02151"/>
<dbReference type="PaxDb" id="272623-L44550"/>
<dbReference type="EnsemblBacteria" id="AAK05320">
    <property type="protein sequence ID" value="AAK05320"/>
    <property type="gene ID" value="L44550"/>
</dbReference>
<dbReference type="KEGG" id="lla:L44550"/>
<dbReference type="PATRIC" id="fig|272623.7.peg.1321"/>
<dbReference type="eggNOG" id="COG1119">
    <property type="taxonomic scope" value="Bacteria"/>
</dbReference>
<dbReference type="HOGENOM" id="CLU_000604_1_11_9"/>
<dbReference type="OrthoDB" id="9789994at2"/>
<dbReference type="Proteomes" id="UP000002196">
    <property type="component" value="Chromosome"/>
</dbReference>
<dbReference type="GO" id="GO:0005524">
    <property type="term" value="F:ATP binding"/>
    <property type="evidence" value="ECO:0007669"/>
    <property type="project" value="UniProtKB-KW"/>
</dbReference>
<dbReference type="GO" id="GO:0016887">
    <property type="term" value="F:ATP hydrolysis activity"/>
    <property type="evidence" value="ECO:0007669"/>
    <property type="project" value="InterPro"/>
</dbReference>
<dbReference type="CDD" id="cd00267">
    <property type="entry name" value="ABC_ATPase"/>
    <property type="match status" value="1"/>
</dbReference>
<dbReference type="Gene3D" id="3.40.50.300">
    <property type="entry name" value="P-loop containing nucleotide triphosphate hydrolases"/>
    <property type="match status" value="1"/>
</dbReference>
<dbReference type="InterPro" id="IPR003593">
    <property type="entry name" value="AAA+_ATPase"/>
</dbReference>
<dbReference type="InterPro" id="IPR003439">
    <property type="entry name" value="ABC_transporter-like_ATP-bd"/>
</dbReference>
<dbReference type="InterPro" id="IPR017871">
    <property type="entry name" value="ABC_transporter-like_CS"/>
</dbReference>
<dbReference type="InterPro" id="IPR050153">
    <property type="entry name" value="Metal_Ion_Import_ABC"/>
</dbReference>
<dbReference type="InterPro" id="IPR027417">
    <property type="entry name" value="P-loop_NTPase"/>
</dbReference>
<dbReference type="PANTHER" id="PTHR42734">
    <property type="entry name" value="METAL TRANSPORT SYSTEM ATP-BINDING PROTEIN TM_0124-RELATED"/>
    <property type="match status" value="1"/>
</dbReference>
<dbReference type="PANTHER" id="PTHR42734:SF17">
    <property type="entry name" value="METAL TRANSPORT SYSTEM ATP-BINDING PROTEIN TM_0124-RELATED"/>
    <property type="match status" value="1"/>
</dbReference>
<dbReference type="Pfam" id="PF00005">
    <property type="entry name" value="ABC_tran"/>
    <property type="match status" value="1"/>
</dbReference>
<dbReference type="SMART" id="SM00382">
    <property type="entry name" value="AAA"/>
    <property type="match status" value="1"/>
</dbReference>
<dbReference type="SUPFAM" id="SSF52540">
    <property type="entry name" value="P-loop containing nucleoside triphosphate hydrolases"/>
    <property type="match status" value="1"/>
</dbReference>
<dbReference type="PROSITE" id="PS00211">
    <property type="entry name" value="ABC_TRANSPORTER_1"/>
    <property type="match status" value="1"/>
</dbReference>
<dbReference type="PROSITE" id="PS50893">
    <property type="entry name" value="ABC_TRANSPORTER_2"/>
    <property type="match status" value="1"/>
</dbReference>
<reference key="1">
    <citation type="journal article" date="1992" name="J. Bacteriol.">
        <title>Branched-chain amino acid biosynthesis genes in Lactococcus lactis subsp. lactis.</title>
        <authorList>
            <person name="Godon J.-J."/>
            <person name="Chopin M.-C."/>
            <person name="Ehrlich S.D."/>
        </authorList>
    </citation>
    <scope>NUCLEOTIDE SEQUENCE [GENOMIC DNA]</scope>
    <source>
        <strain>NCDO 2118</strain>
    </source>
</reference>
<reference key="2">
    <citation type="journal article" date="1993" name="J. Bacteriol.">
        <title>Gene inactivation in Lactococcus lactis: branched-chain amino acid biosynthesis.</title>
        <authorList>
            <person name="Godon J.-J."/>
            <person name="Delorme C."/>
            <person name="Bardowski J."/>
            <person name="Chopin M.-C."/>
            <person name="Ehrlich S.D."/>
            <person name="Renault P."/>
        </authorList>
    </citation>
    <scope>NUCLEOTIDE SEQUENCE [GENOMIC DNA]</scope>
    <source>
        <strain>IL1403</strain>
    </source>
</reference>
<reference key="3">
    <citation type="journal article" date="2001" name="Genome Res.">
        <title>The complete genome sequence of the lactic acid bacterium Lactococcus lactis ssp. lactis IL1403.</title>
        <authorList>
            <person name="Bolotin A."/>
            <person name="Wincker P."/>
            <person name="Mauger S."/>
            <person name="Jaillon O."/>
            <person name="Malarme K."/>
            <person name="Weissenbach J."/>
            <person name="Ehrlich S.D."/>
            <person name="Sorokin A."/>
        </authorList>
    </citation>
    <scope>NUCLEOTIDE SEQUENCE [LARGE SCALE GENOMIC DNA]</scope>
    <source>
        <strain>IL1403</strain>
    </source>
</reference>
<feature type="chain" id="PRO_0000093287" description="Uncharacterized ABC transporter ATP-binding protein YmeB">
    <location>
        <begin position="1"/>
        <end position="259"/>
    </location>
</feature>
<feature type="domain" description="ABC transporter" evidence="1">
    <location>
        <begin position="4"/>
        <end position="243"/>
    </location>
</feature>
<feature type="binding site" evidence="1">
    <location>
        <begin position="36"/>
        <end position="43"/>
    </location>
    <ligand>
        <name>ATP</name>
        <dbReference type="ChEBI" id="CHEBI:30616"/>
    </ligand>
</feature>
<feature type="sequence conflict" description="In Ref. 1; AAB81917." evidence="2" ref="1">
    <original>I</original>
    <variation>V</variation>
    <location>
        <position position="9"/>
    </location>
</feature>
<feature type="sequence conflict" description="In Ref. 1; AAB81917." evidence="2" ref="1">
    <original>G</original>
    <variation>R</variation>
    <location>
        <position position="68"/>
    </location>
</feature>
<keyword id="KW-0067">ATP-binding</keyword>
<keyword id="KW-0547">Nucleotide-binding</keyword>
<keyword id="KW-1185">Reference proteome</keyword>
<keyword id="KW-0813">Transport</keyword>
<protein>
    <recommendedName>
        <fullName>Uncharacterized ABC transporter ATP-binding protein YmeB</fullName>
    </recommendedName>
</protein>